<protein>
    <recommendedName>
        <fullName evidence="1">S-adenosylmethionine decarboxylase proenzyme</fullName>
        <shortName evidence="1">AdoMetDC</shortName>
        <shortName evidence="1">SAMDC</shortName>
        <ecNumber evidence="1">4.1.1.50</ecNumber>
    </recommendedName>
    <component>
        <recommendedName>
            <fullName evidence="1">S-adenosylmethionine decarboxylase beta chain</fullName>
        </recommendedName>
    </component>
    <component>
        <recommendedName>
            <fullName evidence="1">S-adenosylmethionine decarboxylase alpha chain</fullName>
        </recommendedName>
    </component>
</protein>
<accession>Q8XMZ0</accession>
<comment type="function">
    <text evidence="1">Catalyzes the decarboxylation of S-adenosylmethionine to S-adenosylmethioninamine (dcAdoMet), the propylamine donor required for the synthesis of the polyamines spermine and spermidine from the diamine putrescine.</text>
</comment>
<comment type="catalytic activity">
    <reaction evidence="1">
        <text>S-adenosyl-L-methionine + H(+) = S-adenosyl 3-(methylsulfanyl)propylamine + CO2</text>
        <dbReference type="Rhea" id="RHEA:15981"/>
        <dbReference type="ChEBI" id="CHEBI:15378"/>
        <dbReference type="ChEBI" id="CHEBI:16526"/>
        <dbReference type="ChEBI" id="CHEBI:57443"/>
        <dbReference type="ChEBI" id="CHEBI:59789"/>
        <dbReference type="EC" id="4.1.1.50"/>
    </reaction>
</comment>
<comment type="cofactor">
    <cofactor evidence="1">
        <name>pyruvate</name>
        <dbReference type="ChEBI" id="CHEBI:15361"/>
    </cofactor>
    <text evidence="1">Binds 1 pyruvoyl group covalently per subunit.</text>
</comment>
<comment type="pathway">
    <text evidence="1">Amine and polyamine biosynthesis; S-adenosylmethioninamine biosynthesis; S-adenosylmethioninamine from S-adenosyl-L-methionine: step 1/1.</text>
</comment>
<comment type="subunit">
    <text evidence="1">Heterooctamer of four alpha and four beta chains arranged as a tetramer of alpha/beta heterodimers.</text>
</comment>
<comment type="PTM">
    <text evidence="1">Is synthesized initially as an inactive proenzyme. Formation of the active enzyme involves a self-maturation process in which the active site pyruvoyl group is generated from an internal serine residue via an autocatalytic post-translational modification. Two non-identical subunits are generated from the proenzyme in this reaction, and the pyruvate is formed at the N-terminus of the alpha chain, which is derived from the carboxyl end of the proenzyme. The post-translation cleavage follows an unusual pathway, termed non-hydrolytic serinolysis, in which the side chain hydroxyl group of the serine supplies its oxygen atom to form the C-terminus of the beta chain, while the remainder of the serine residue undergoes an oxidative deamination to produce ammonia and the pyruvoyl group blocking the N-terminus of the alpha chain.</text>
</comment>
<comment type="similarity">
    <text evidence="1">Belongs to the prokaryotic AdoMetDC family. Type 2 subfamily.</text>
</comment>
<reference key="1">
    <citation type="journal article" date="2002" name="Proc. Natl. Acad. Sci. U.S.A.">
        <title>Complete genome sequence of Clostridium perfringens, an anaerobic flesh-eater.</title>
        <authorList>
            <person name="Shimizu T."/>
            <person name="Ohtani K."/>
            <person name="Hirakawa H."/>
            <person name="Ohshima K."/>
            <person name="Yamashita A."/>
            <person name="Shiba T."/>
            <person name="Ogasawara N."/>
            <person name="Hattori M."/>
            <person name="Kuhara S."/>
            <person name="Hayashi H."/>
        </authorList>
    </citation>
    <scope>NUCLEOTIDE SEQUENCE [LARGE SCALE GENOMIC DNA]</scope>
    <source>
        <strain>13 / Type A</strain>
    </source>
</reference>
<name>SPED_CLOPE</name>
<gene>
    <name evidence="1" type="primary">speD</name>
    <name type="ordered locus">CPE0548</name>
</gene>
<feature type="chain" id="PRO_0000030041" description="S-adenosylmethionine decarboxylase beta chain" evidence="1">
    <location>
        <begin position="1"/>
        <end position="120"/>
    </location>
</feature>
<feature type="chain" id="PRO_0000030042" description="S-adenosylmethionine decarboxylase alpha chain" evidence="1">
    <location>
        <begin position="121"/>
        <end position="271"/>
    </location>
</feature>
<feature type="active site" description="Schiff-base intermediate with substrate; via pyruvic acid" evidence="1">
    <location>
        <position position="121"/>
    </location>
</feature>
<feature type="active site" description="Proton acceptor; for processing activity" evidence="1">
    <location>
        <position position="126"/>
    </location>
</feature>
<feature type="active site" description="Proton donor; for catalytic activity" evidence="1">
    <location>
        <position position="149"/>
    </location>
</feature>
<feature type="site" description="Cleavage (non-hydrolytic); by autolysis" evidence="1">
    <location>
        <begin position="120"/>
        <end position="121"/>
    </location>
</feature>
<feature type="modified residue" description="Pyruvic acid (Ser); by autocatalysis" evidence="1">
    <location>
        <position position="121"/>
    </location>
</feature>
<organism>
    <name type="scientific">Clostridium perfringens (strain 13 / Type A)</name>
    <dbReference type="NCBI Taxonomy" id="195102"/>
    <lineage>
        <taxon>Bacteria</taxon>
        <taxon>Bacillati</taxon>
        <taxon>Bacillota</taxon>
        <taxon>Clostridia</taxon>
        <taxon>Eubacteriales</taxon>
        <taxon>Clostridiaceae</taxon>
        <taxon>Clostridium</taxon>
    </lineage>
</organism>
<dbReference type="EC" id="4.1.1.50" evidence="1"/>
<dbReference type="EMBL" id="BA000016">
    <property type="protein sequence ID" value="BAB80254.1"/>
    <property type="molecule type" value="Genomic_DNA"/>
</dbReference>
<dbReference type="RefSeq" id="WP_011009885.1">
    <property type="nucleotide sequence ID" value="NC_003366.1"/>
</dbReference>
<dbReference type="STRING" id="195102.gene:10489805"/>
<dbReference type="GeneID" id="93003129"/>
<dbReference type="KEGG" id="cpe:CPE0548"/>
<dbReference type="HOGENOM" id="CLU_092007_0_0_9"/>
<dbReference type="UniPathway" id="UPA00331">
    <property type="reaction ID" value="UER00451"/>
</dbReference>
<dbReference type="Proteomes" id="UP000000818">
    <property type="component" value="Chromosome"/>
</dbReference>
<dbReference type="GO" id="GO:0005829">
    <property type="term" value="C:cytosol"/>
    <property type="evidence" value="ECO:0007669"/>
    <property type="project" value="TreeGrafter"/>
</dbReference>
<dbReference type="GO" id="GO:0004014">
    <property type="term" value="F:adenosylmethionine decarboxylase activity"/>
    <property type="evidence" value="ECO:0007669"/>
    <property type="project" value="UniProtKB-UniRule"/>
</dbReference>
<dbReference type="GO" id="GO:0008295">
    <property type="term" value="P:spermidine biosynthetic process"/>
    <property type="evidence" value="ECO:0007669"/>
    <property type="project" value="UniProtKB-UniRule"/>
</dbReference>
<dbReference type="Gene3D" id="3.60.90.10">
    <property type="entry name" value="S-adenosylmethionine decarboxylase"/>
    <property type="match status" value="1"/>
</dbReference>
<dbReference type="HAMAP" id="MF_00465">
    <property type="entry name" value="AdoMetDC_2"/>
    <property type="match status" value="1"/>
</dbReference>
<dbReference type="InterPro" id="IPR003826">
    <property type="entry name" value="AdoMetDC_fam_prok"/>
</dbReference>
<dbReference type="InterPro" id="IPR009165">
    <property type="entry name" value="S-AdoMet_deCO2ase_bac"/>
</dbReference>
<dbReference type="InterPro" id="IPR016067">
    <property type="entry name" value="S-AdoMet_deCO2ase_core"/>
</dbReference>
<dbReference type="NCBIfam" id="TIGR03331">
    <property type="entry name" value="SAM_DCase_Eco"/>
    <property type="match status" value="1"/>
</dbReference>
<dbReference type="PANTHER" id="PTHR33866">
    <property type="entry name" value="S-ADENOSYLMETHIONINE DECARBOXYLASE PROENZYME"/>
    <property type="match status" value="1"/>
</dbReference>
<dbReference type="PANTHER" id="PTHR33866:SF1">
    <property type="entry name" value="S-ADENOSYLMETHIONINE DECARBOXYLASE PROENZYME"/>
    <property type="match status" value="1"/>
</dbReference>
<dbReference type="Pfam" id="PF02675">
    <property type="entry name" value="AdoMet_dc"/>
    <property type="match status" value="1"/>
</dbReference>
<dbReference type="PIRSF" id="PIRSF001356">
    <property type="entry name" value="SAM_decarboxylas"/>
    <property type="match status" value="1"/>
</dbReference>
<dbReference type="SUPFAM" id="SSF56276">
    <property type="entry name" value="S-adenosylmethionine decarboxylase"/>
    <property type="match status" value="1"/>
</dbReference>
<proteinExistence type="inferred from homology"/>
<keyword id="KW-0068">Autocatalytic cleavage</keyword>
<keyword id="KW-0210">Decarboxylase</keyword>
<keyword id="KW-0456">Lyase</keyword>
<keyword id="KW-0620">Polyamine biosynthesis</keyword>
<keyword id="KW-0670">Pyruvate</keyword>
<keyword id="KW-1185">Reference proteome</keyword>
<keyword id="KW-0949">S-adenosyl-L-methionine</keyword>
<keyword id="KW-0704">Schiff base</keyword>
<keyword id="KW-0745">Spermidine biosynthesis</keyword>
<keyword id="KW-0865">Zymogen</keyword>
<evidence type="ECO:0000255" key="1">
    <source>
        <dbReference type="HAMAP-Rule" id="MF_00465"/>
    </source>
</evidence>
<sequence>MLGLKEKICLYGFNNLTKTLSFNIYDICYAKTEREKEDYIKYIDEQYNSERLTKILCDVTEMIGAHVLNISKQDYEPQGASVNVLITEEALPVALIDPSCNKGELSYLELRDSVVGHLDKSHLTVHTYPEFHPNNDIISFRVDIDVSTCGKISPLNALDYLIGSFDSDVITIDYRVRGFTRDVDGRKCYIDHDIKSIQDYIDGETLKKYDAMDVNVYQSNIFHTKMMLKDIVLNNYLFNSDPYELSPNDRREIRDRISKEMIEIYGGVNIY</sequence>